<proteinExistence type="evidence at protein level"/>
<gene>
    <name evidence="9 11" type="primary">Trim31</name>
</gene>
<name>TRI31_MOUSE</name>
<dbReference type="EC" id="2.3.2.27" evidence="8"/>
<dbReference type="EMBL" id="AK033650">
    <property type="protein sequence ID" value="BAC28407.1"/>
    <property type="molecule type" value="mRNA"/>
</dbReference>
<dbReference type="EMBL" id="CH466559">
    <property type="protein sequence ID" value="EDL23309.1"/>
    <property type="molecule type" value="Genomic_DNA"/>
</dbReference>
<dbReference type="EMBL" id="BC026666">
    <property type="protein sequence ID" value="AAH26666.1"/>
    <property type="molecule type" value="mRNA"/>
</dbReference>
<dbReference type="CCDS" id="CCDS28728.1"/>
<dbReference type="RefSeq" id="NP_666189.1">
    <property type="nucleotide sequence ID" value="NM_146077.2"/>
</dbReference>
<dbReference type="SMR" id="Q8R0K2"/>
<dbReference type="BioGRID" id="230316">
    <property type="interactions" value="4"/>
</dbReference>
<dbReference type="FunCoup" id="Q8R0K2">
    <property type="interactions" value="15"/>
</dbReference>
<dbReference type="STRING" id="10090.ENSMUSP00000077535"/>
<dbReference type="GlyGen" id="Q8R0K2">
    <property type="glycosylation" value="3 sites, 1 O-linked glycan (2 sites)"/>
</dbReference>
<dbReference type="iPTMnet" id="Q8R0K2"/>
<dbReference type="PhosphoSitePlus" id="Q8R0K2"/>
<dbReference type="PaxDb" id="10090-ENSMUSP00000077535"/>
<dbReference type="PeptideAtlas" id="Q8R0K2"/>
<dbReference type="ProteomicsDB" id="259316"/>
<dbReference type="Antibodypedia" id="11702">
    <property type="antibodies" value="201 antibodies from 27 providers"/>
</dbReference>
<dbReference type="DNASU" id="224762"/>
<dbReference type="Ensembl" id="ENSMUST00000078438.5">
    <property type="protein sequence ID" value="ENSMUSP00000077535.5"/>
    <property type="gene ID" value="ENSMUSG00000058063.5"/>
</dbReference>
<dbReference type="GeneID" id="224762"/>
<dbReference type="KEGG" id="mmu:224762"/>
<dbReference type="UCSC" id="uc008cll.1">
    <property type="organism name" value="mouse"/>
</dbReference>
<dbReference type="AGR" id="MGI:2385051"/>
<dbReference type="CTD" id="11074"/>
<dbReference type="MGI" id="MGI:2385051">
    <property type="gene designation" value="Trim31"/>
</dbReference>
<dbReference type="VEuPathDB" id="HostDB:ENSMUSG00000058063"/>
<dbReference type="eggNOG" id="KOG2177">
    <property type="taxonomic scope" value="Eukaryota"/>
</dbReference>
<dbReference type="GeneTree" id="ENSGT00940000163585"/>
<dbReference type="HOGENOM" id="CLU_013137_0_3_1"/>
<dbReference type="InParanoid" id="Q8R0K2"/>
<dbReference type="OMA" id="FWALRIA"/>
<dbReference type="OrthoDB" id="654191at2759"/>
<dbReference type="PhylomeDB" id="Q8R0K2"/>
<dbReference type="TreeFam" id="TF342569"/>
<dbReference type="UniPathway" id="UPA00143"/>
<dbReference type="BioGRID-ORCS" id="224762">
    <property type="hits" value="2 hits in 77 CRISPR screens"/>
</dbReference>
<dbReference type="PRO" id="PR:Q8R0K2"/>
<dbReference type="Proteomes" id="UP000000589">
    <property type="component" value="Chromosome 17"/>
</dbReference>
<dbReference type="RNAct" id="Q8R0K2">
    <property type="molecule type" value="protein"/>
</dbReference>
<dbReference type="Bgee" id="ENSMUSG00000058063">
    <property type="expression patterns" value="Expressed in small intestine Peyer's patch and 28 other cell types or tissues"/>
</dbReference>
<dbReference type="GO" id="GO:0005739">
    <property type="term" value="C:mitochondrion"/>
    <property type="evidence" value="ECO:0000250"/>
    <property type="project" value="UniProtKB"/>
</dbReference>
<dbReference type="GO" id="GO:0061630">
    <property type="term" value="F:ubiquitin protein ligase activity"/>
    <property type="evidence" value="ECO:0000314"/>
    <property type="project" value="UniProtKB"/>
</dbReference>
<dbReference type="GO" id="GO:0008270">
    <property type="term" value="F:zinc ion binding"/>
    <property type="evidence" value="ECO:0007669"/>
    <property type="project" value="UniProtKB-KW"/>
</dbReference>
<dbReference type="GO" id="GO:0140374">
    <property type="term" value="P:antiviral innate immune response"/>
    <property type="evidence" value="ECO:0000315"/>
    <property type="project" value="UniProtKB"/>
</dbReference>
<dbReference type="GO" id="GO:0051607">
    <property type="term" value="P:defense response to virus"/>
    <property type="evidence" value="ECO:0000315"/>
    <property type="project" value="UniProtKB"/>
</dbReference>
<dbReference type="GO" id="GO:0046597">
    <property type="term" value="P:host-mediated suppression of symbiont invasion"/>
    <property type="evidence" value="ECO:0000314"/>
    <property type="project" value="UniProtKB"/>
</dbReference>
<dbReference type="GO" id="GO:0006954">
    <property type="term" value="P:inflammatory response"/>
    <property type="evidence" value="ECO:0007669"/>
    <property type="project" value="UniProtKB-KW"/>
</dbReference>
<dbReference type="GO" id="GO:0045087">
    <property type="term" value="P:innate immune response"/>
    <property type="evidence" value="ECO:0000314"/>
    <property type="project" value="UniProtKB"/>
</dbReference>
<dbReference type="GO" id="GO:1900226">
    <property type="term" value="P:negative regulation of NLRP3 inflammasome complex assembly"/>
    <property type="evidence" value="ECO:0000314"/>
    <property type="project" value="UniProtKB"/>
</dbReference>
<dbReference type="GO" id="GO:0070936">
    <property type="term" value="P:protein K48-linked ubiquitination"/>
    <property type="evidence" value="ECO:0000314"/>
    <property type="project" value="UniProtKB"/>
</dbReference>
<dbReference type="GO" id="GO:0006511">
    <property type="term" value="P:ubiquitin-dependent protein catabolic process"/>
    <property type="evidence" value="ECO:0000314"/>
    <property type="project" value="UniProtKB"/>
</dbReference>
<dbReference type="CDD" id="cd16582">
    <property type="entry name" value="RING-HC_TRIM31_C-V"/>
    <property type="match status" value="1"/>
</dbReference>
<dbReference type="FunFam" id="2.60.120.920:FF:000044">
    <property type="entry name" value="Tripartite motif-containing protein 10"/>
    <property type="match status" value="1"/>
</dbReference>
<dbReference type="Gene3D" id="2.60.120.920">
    <property type="match status" value="1"/>
</dbReference>
<dbReference type="Gene3D" id="3.30.160.60">
    <property type="entry name" value="Classic Zinc Finger"/>
    <property type="match status" value="1"/>
</dbReference>
<dbReference type="Gene3D" id="3.30.40.10">
    <property type="entry name" value="Zinc/RING finger domain, C3HC4 (zinc finger)"/>
    <property type="match status" value="1"/>
</dbReference>
<dbReference type="InterPro" id="IPR001870">
    <property type="entry name" value="B30.2/SPRY"/>
</dbReference>
<dbReference type="InterPro" id="IPR043136">
    <property type="entry name" value="B30.2/SPRY_sf"/>
</dbReference>
<dbReference type="InterPro" id="IPR003879">
    <property type="entry name" value="Butyrophylin_SPRY"/>
</dbReference>
<dbReference type="InterPro" id="IPR013320">
    <property type="entry name" value="ConA-like_dom_sf"/>
</dbReference>
<dbReference type="InterPro" id="IPR003877">
    <property type="entry name" value="SPRY_dom"/>
</dbReference>
<dbReference type="InterPro" id="IPR050143">
    <property type="entry name" value="TRIM/RBCC"/>
</dbReference>
<dbReference type="InterPro" id="IPR000315">
    <property type="entry name" value="Znf_B-box"/>
</dbReference>
<dbReference type="InterPro" id="IPR001841">
    <property type="entry name" value="Znf_RING"/>
</dbReference>
<dbReference type="InterPro" id="IPR013083">
    <property type="entry name" value="Znf_RING/FYVE/PHD"/>
</dbReference>
<dbReference type="InterPro" id="IPR017907">
    <property type="entry name" value="Znf_RING_CS"/>
</dbReference>
<dbReference type="PANTHER" id="PTHR24103">
    <property type="entry name" value="E3 UBIQUITIN-PROTEIN LIGASE TRIM"/>
    <property type="match status" value="1"/>
</dbReference>
<dbReference type="Pfam" id="PF00622">
    <property type="entry name" value="SPRY"/>
    <property type="match status" value="1"/>
</dbReference>
<dbReference type="Pfam" id="PF00643">
    <property type="entry name" value="zf-B_box"/>
    <property type="match status" value="1"/>
</dbReference>
<dbReference type="Pfam" id="PF15227">
    <property type="entry name" value="zf-C3HC4_4"/>
    <property type="match status" value="1"/>
</dbReference>
<dbReference type="PRINTS" id="PR01407">
    <property type="entry name" value="BUTYPHLNCDUF"/>
</dbReference>
<dbReference type="SMART" id="SM00336">
    <property type="entry name" value="BBOX"/>
    <property type="match status" value="1"/>
</dbReference>
<dbReference type="SMART" id="SM00184">
    <property type="entry name" value="RING"/>
    <property type="match status" value="1"/>
</dbReference>
<dbReference type="SMART" id="SM00449">
    <property type="entry name" value="SPRY"/>
    <property type="match status" value="1"/>
</dbReference>
<dbReference type="SUPFAM" id="SSF57845">
    <property type="entry name" value="B-box zinc-binding domain"/>
    <property type="match status" value="1"/>
</dbReference>
<dbReference type="SUPFAM" id="SSF49899">
    <property type="entry name" value="Concanavalin A-like lectins/glucanases"/>
    <property type="match status" value="1"/>
</dbReference>
<dbReference type="SUPFAM" id="SSF57850">
    <property type="entry name" value="RING/U-box"/>
    <property type="match status" value="1"/>
</dbReference>
<dbReference type="PROSITE" id="PS50188">
    <property type="entry name" value="B302_SPRY"/>
    <property type="match status" value="1"/>
</dbReference>
<dbReference type="PROSITE" id="PS50119">
    <property type="entry name" value="ZF_BBOX"/>
    <property type="match status" value="1"/>
</dbReference>
<dbReference type="PROSITE" id="PS00518">
    <property type="entry name" value="ZF_RING_1"/>
    <property type="match status" value="1"/>
</dbReference>
<dbReference type="PROSITE" id="PS50089">
    <property type="entry name" value="ZF_RING_2"/>
    <property type="match status" value="1"/>
</dbReference>
<accession>Q8R0K2</accession>
<keyword id="KW-0051">Antiviral defense</keyword>
<keyword id="KW-0175">Coiled coil</keyword>
<keyword id="KW-0963">Cytoplasm</keyword>
<keyword id="KW-0391">Immunity</keyword>
<keyword id="KW-0395">Inflammatory response</keyword>
<keyword id="KW-0399">Innate immunity</keyword>
<keyword id="KW-0479">Metal-binding</keyword>
<keyword id="KW-0496">Mitochondrion</keyword>
<keyword id="KW-1185">Reference proteome</keyword>
<keyword id="KW-0808">Transferase</keyword>
<keyword id="KW-0832">Ubl conjugation</keyword>
<keyword id="KW-0833">Ubl conjugation pathway</keyword>
<keyword id="KW-0862">Zinc</keyword>
<keyword id="KW-0863">Zinc-finger</keyword>
<protein>
    <recommendedName>
        <fullName evidence="10">E3 ubiquitin-protein ligase TRIM31</fullName>
        <ecNumber evidence="8">2.3.2.27</ecNumber>
    </recommendedName>
    <alternativeName>
        <fullName evidence="9">Tripartite motif-containing protein 31</fullName>
    </alternativeName>
</protein>
<reference key="1">
    <citation type="journal article" date="2005" name="Science">
        <title>The transcriptional landscape of the mammalian genome.</title>
        <authorList>
            <person name="Carninci P."/>
            <person name="Kasukawa T."/>
            <person name="Katayama S."/>
            <person name="Gough J."/>
            <person name="Frith M.C."/>
            <person name="Maeda N."/>
            <person name="Oyama R."/>
            <person name="Ravasi T."/>
            <person name="Lenhard B."/>
            <person name="Wells C."/>
            <person name="Kodzius R."/>
            <person name="Shimokawa K."/>
            <person name="Bajic V.B."/>
            <person name="Brenner S.E."/>
            <person name="Batalov S."/>
            <person name="Forrest A.R."/>
            <person name="Zavolan M."/>
            <person name="Davis M.J."/>
            <person name="Wilming L.G."/>
            <person name="Aidinis V."/>
            <person name="Allen J.E."/>
            <person name="Ambesi-Impiombato A."/>
            <person name="Apweiler R."/>
            <person name="Aturaliya R.N."/>
            <person name="Bailey T.L."/>
            <person name="Bansal M."/>
            <person name="Baxter L."/>
            <person name="Beisel K.W."/>
            <person name="Bersano T."/>
            <person name="Bono H."/>
            <person name="Chalk A.M."/>
            <person name="Chiu K.P."/>
            <person name="Choudhary V."/>
            <person name="Christoffels A."/>
            <person name="Clutterbuck D.R."/>
            <person name="Crowe M.L."/>
            <person name="Dalla E."/>
            <person name="Dalrymple B.P."/>
            <person name="de Bono B."/>
            <person name="Della Gatta G."/>
            <person name="di Bernardo D."/>
            <person name="Down T."/>
            <person name="Engstrom P."/>
            <person name="Fagiolini M."/>
            <person name="Faulkner G."/>
            <person name="Fletcher C.F."/>
            <person name="Fukushima T."/>
            <person name="Furuno M."/>
            <person name="Futaki S."/>
            <person name="Gariboldi M."/>
            <person name="Georgii-Hemming P."/>
            <person name="Gingeras T.R."/>
            <person name="Gojobori T."/>
            <person name="Green R.E."/>
            <person name="Gustincich S."/>
            <person name="Harbers M."/>
            <person name="Hayashi Y."/>
            <person name="Hensch T.K."/>
            <person name="Hirokawa N."/>
            <person name="Hill D."/>
            <person name="Huminiecki L."/>
            <person name="Iacono M."/>
            <person name="Ikeo K."/>
            <person name="Iwama A."/>
            <person name="Ishikawa T."/>
            <person name="Jakt M."/>
            <person name="Kanapin A."/>
            <person name="Katoh M."/>
            <person name="Kawasawa Y."/>
            <person name="Kelso J."/>
            <person name="Kitamura H."/>
            <person name="Kitano H."/>
            <person name="Kollias G."/>
            <person name="Krishnan S.P."/>
            <person name="Kruger A."/>
            <person name="Kummerfeld S.K."/>
            <person name="Kurochkin I.V."/>
            <person name="Lareau L.F."/>
            <person name="Lazarevic D."/>
            <person name="Lipovich L."/>
            <person name="Liu J."/>
            <person name="Liuni S."/>
            <person name="McWilliam S."/>
            <person name="Madan Babu M."/>
            <person name="Madera M."/>
            <person name="Marchionni L."/>
            <person name="Matsuda H."/>
            <person name="Matsuzawa S."/>
            <person name="Miki H."/>
            <person name="Mignone F."/>
            <person name="Miyake S."/>
            <person name="Morris K."/>
            <person name="Mottagui-Tabar S."/>
            <person name="Mulder N."/>
            <person name="Nakano N."/>
            <person name="Nakauchi H."/>
            <person name="Ng P."/>
            <person name="Nilsson R."/>
            <person name="Nishiguchi S."/>
            <person name="Nishikawa S."/>
            <person name="Nori F."/>
            <person name="Ohara O."/>
            <person name="Okazaki Y."/>
            <person name="Orlando V."/>
            <person name="Pang K.C."/>
            <person name="Pavan W.J."/>
            <person name="Pavesi G."/>
            <person name="Pesole G."/>
            <person name="Petrovsky N."/>
            <person name="Piazza S."/>
            <person name="Reed J."/>
            <person name="Reid J.F."/>
            <person name="Ring B.Z."/>
            <person name="Ringwald M."/>
            <person name="Rost B."/>
            <person name="Ruan Y."/>
            <person name="Salzberg S.L."/>
            <person name="Sandelin A."/>
            <person name="Schneider C."/>
            <person name="Schoenbach C."/>
            <person name="Sekiguchi K."/>
            <person name="Semple C.A."/>
            <person name="Seno S."/>
            <person name="Sessa L."/>
            <person name="Sheng Y."/>
            <person name="Shibata Y."/>
            <person name="Shimada H."/>
            <person name="Shimada K."/>
            <person name="Silva D."/>
            <person name="Sinclair B."/>
            <person name="Sperling S."/>
            <person name="Stupka E."/>
            <person name="Sugiura K."/>
            <person name="Sultana R."/>
            <person name="Takenaka Y."/>
            <person name="Taki K."/>
            <person name="Tammoja K."/>
            <person name="Tan S.L."/>
            <person name="Tang S."/>
            <person name="Taylor M.S."/>
            <person name="Tegner J."/>
            <person name="Teichmann S.A."/>
            <person name="Ueda H.R."/>
            <person name="van Nimwegen E."/>
            <person name="Verardo R."/>
            <person name="Wei C.L."/>
            <person name="Yagi K."/>
            <person name="Yamanishi H."/>
            <person name="Zabarovsky E."/>
            <person name="Zhu S."/>
            <person name="Zimmer A."/>
            <person name="Hide W."/>
            <person name="Bult C."/>
            <person name="Grimmond S.M."/>
            <person name="Teasdale R.D."/>
            <person name="Liu E.T."/>
            <person name="Brusic V."/>
            <person name="Quackenbush J."/>
            <person name="Wahlestedt C."/>
            <person name="Mattick J.S."/>
            <person name="Hume D.A."/>
            <person name="Kai C."/>
            <person name="Sasaki D."/>
            <person name="Tomaru Y."/>
            <person name="Fukuda S."/>
            <person name="Kanamori-Katayama M."/>
            <person name="Suzuki M."/>
            <person name="Aoki J."/>
            <person name="Arakawa T."/>
            <person name="Iida J."/>
            <person name="Imamura K."/>
            <person name="Itoh M."/>
            <person name="Kato T."/>
            <person name="Kawaji H."/>
            <person name="Kawagashira N."/>
            <person name="Kawashima T."/>
            <person name="Kojima M."/>
            <person name="Kondo S."/>
            <person name="Konno H."/>
            <person name="Nakano K."/>
            <person name="Ninomiya N."/>
            <person name="Nishio T."/>
            <person name="Okada M."/>
            <person name="Plessy C."/>
            <person name="Shibata K."/>
            <person name="Shiraki T."/>
            <person name="Suzuki S."/>
            <person name="Tagami M."/>
            <person name="Waki K."/>
            <person name="Watahiki A."/>
            <person name="Okamura-Oho Y."/>
            <person name="Suzuki H."/>
            <person name="Kawai J."/>
            <person name="Hayashizaki Y."/>
        </authorList>
    </citation>
    <scope>NUCLEOTIDE SEQUENCE [LARGE SCALE MRNA]</scope>
    <source>
        <strain>C57BL/6J</strain>
        <tissue>Cecum</tissue>
    </source>
</reference>
<reference key="2">
    <citation type="submission" date="2005-07" db="EMBL/GenBank/DDBJ databases">
        <authorList>
            <person name="Mural R.J."/>
            <person name="Adams M.D."/>
            <person name="Myers E.W."/>
            <person name="Smith H.O."/>
            <person name="Venter J.C."/>
        </authorList>
    </citation>
    <scope>NUCLEOTIDE SEQUENCE [LARGE SCALE GENOMIC DNA]</scope>
</reference>
<reference key="3">
    <citation type="journal article" date="2004" name="Genome Res.">
        <title>The status, quality, and expansion of the NIH full-length cDNA project: the Mammalian Gene Collection (MGC).</title>
        <authorList>
            <consortium name="The MGC Project Team"/>
        </authorList>
    </citation>
    <scope>NUCLEOTIDE SEQUENCE [LARGE SCALE MRNA]</scope>
    <source>
        <strain>FVB/N</strain>
        <tissue>Colon</tissue>
    </source>
</reference>
<reference key="4">
    <citation type="journal article" date="2009" name="Biochem. Biophys. Res. Commun.">
        <title>TRIM31 interacts with p52(Shc) and inhibits Src-induced anchorage-independent growth.</title>
        <authorList>
            <person name="Watanabe M."/>
            <person name="Tsukiyama T."/>
            <person name="Hatakeyama S."/>
        </authorList>
    </citation>
    <scope>FUNCTION</scope>
    <scope>TISSUE SPECIFICITY</scope>
    <scope>INTERACTION WITH SHC1</scope>
</reference>
<reference key="5">
    <citation type="journal article" date="2016" name="Nat. Commun.">
        <title>The E3 ubiquitin ligase TRIM31 attenuates NLRP3 inflammasome activation by promoting proteasomal degradation of NLRP3.</title>
        <authorList>
            <person name="Song H."/>
            <person name="Liu B."/>
            <person name="Huai W."/>
            <person name="Yu Z."/>
            <person name="Wang W."/>
            <person name="Zhao J."/>
            <person name="Han L."/>
            <person name="Jiang G."/>
            <person name="Zhang L."/>
            <person name="Gao C."/>
            <person name="Zhao W."/>
        </authorList>
    </citation>
    <scope>FUNCTION</scope>
    <scope>INDUCTION</scope>
    <scope>DISRUPTION PHENOTYPE</scope>
</reference>
<reference key="6">
    <citation type="journal article" date="2017" name="Nat. Immunol.">
        <title>The ubiquitin E3 ligase TRIM31 promotes aggregation and activation of the signaling adaptor MAVS through Lys63-linked polyubiquitination.</title>
        <authorList>
            <person name="Liu B."/>
            <person name="Zhang M."/>
            <person name="Chu H."/>
            <person name="Zhang H."/>
            <person name="Wu H."/>
            <person name="Song G."/>
            <person name="Wang P."/>
            <person name="Zhao K."/>
            <person name="Hou J."/>
            <person name="Wang X."/>
            <person name="Zhang L."/>
            <person name="Gao C."/>
        </authorList>
    </citation>
    <scope>FUNCTION</scope>
    <scope>CATALYTIC ACTIVITY</scope>
    <scope>PATHWAY</scope>
    <scope>DISRUPTION PHENOTYPE</scope>
    <scope>MUTAGENESIS OF 52-CYS--CYS-55</scope>
</reference>
<sequence>MAGQPLACQLQEEVTCPICMEILQDPVTIDCGHNFCLQCISQVGKTSEKIQCPLCKLSVNKNTFRPNKLLASLAEKIQSMDPADIQAEKEDSRCQRHKEKLHYFCEQDGAFLCVVCRDSKDHKSHNVTLIDEAAQNYKVQIESQAQDLGQKDKKIIEEKKQGEGAIWAFRAQVDLEKLKIHEEFKLLRQRLDEEESFLLSRLDWLEQQGAKQLRQYVTVTEKQLNSLRKLTKSLKIRLQSSSMELLKDIKDALSRGKEFQFLNPNPVPEDLEKKCSEAKARHESIIKTLTELKDDMNAEGKRDKSAFMNSLNKEEKESWSLLQKNNSVLPTSVPVTLDKSSADPDLTFSQDLKKVTLYIVAGKASNRQAKPRPFYPFHCVRGSPGLSSGRQVWEAEIRGPSGGACIVGVVTELARGAQSQTVSAQSYIWALRISPSGCQPFTNCKAQEYLQVCLKKVGVYVNHDCGEVVFYDAITSKHIYTFQTSFDGKVFPLFGLQVACSHITLSP</sequence>
<organism>
    <name type="scientific">Mus musculus</name>
    <name type="common">Mouse</name>
    <dbReference type="NCBI Taxonomy" id="10090"/>
    <lineage>
        <taxon>Eukaryota</taxon>
        <taxon>Metazoa</taxon>
        <taxon>Chordata</taxon>
        <taxon>Craniata</taxon>
        <taxon>Vertebrata</taxon>
        <taxon>Euteleostomi</taxon>
        <taxon>Mammalia</taxon>
        <taxon>Eutheria</taxon>
        <taxon>Euarchontoglires</taxon>
        <taxon>Glires</taxon>
        <taxon>Rodentia</taxon>
        <taxon>Myomorpha</taxon>
        <taxon>Muroidea</taxon>
        <taxon>Muridae</taxon>
        <taxon>Murinae</taxon>
        <taxon>Mus</taxon>
        <taxon>Mus</taxon>
    </lineage>
</organism>
<feature type="chain" id="PRO_0000386639" description="E3 ubiquitin-protein ligase TRIM31">
    <location>
        <begin position="1"/>
        <end position="507"/>
    </location>
</feature>
<feature type="domain" description="B30.2/SPRY" evidence="5">
    <location>
        <begin position="315"/>
        <end position="507"/>
    </location>
</feature>
<feature type="zinc finger region" description="RING-type" evidence="4">
    <location>
        <begin position="16"/>
        <end position="56"/>
    </location>
</feature>
<feature type="zinc finger region" description="B box-type" evidence="3">
    <location>
        <begin position="89"/>
        <end position="130"/>
    </location>
</feature>
<feature type="coiled-coil region" evidence="2">
    <location>
        <begin position="176"/>
        <end position="241"/>
    </location>
</feature>
<feature type="coiled-coil region" evidence="2">
    <location>
        <begin position="269"/>
        <end position="298"/>
    </location>
</feature>
<feature type="binding site" evidence="3">
    <location>
        <position position="94"/>
    </location>
    <ligand>
        <name>Zn(2+)</name>
        <dbReference type="ChEBI" id="CHEBI:29105"/>
    </ligand>
</feature>
<feature type="binding site" evidence="3">
    <location>
        <position position="97"/>
    </location>
    <ligand>
        <name>Zn(2+)</name>
        <dbReference type="ChEBI" id="CHEBI:29105"/>
    </ligand>
</feature>
<feature type="binding site" evidence="3">
    <location>
        <position position="116"/>
    </location>
    <ligand>
        <name>Zn(2+)</name>
        <dbReference type="ChEBI" id="CHEBI:29105"/>
    </ligand>
</feature>
<feature type="binding site" evidence="3">
    <location>
        <position position="122"/>
    </location>
    <ligand>
        <name>Zn(2+)</name>
        <dbReference type="ChEBI" id="CHEBI:29105"/>
    </ligand>
</feature>
<feature type="mutagenesis site" description="Abolished E3 ubiquitin-protein ligase activity and ability to ubiquitinate MAVS." evidence="8">
    <original>CPLC</original>
    <variation>APLA</variation>
    <location>
        <begin position="52"/>
        <end position="55"/>
    </location>
</feature>
<evidence type="ECO:0000250" key="1">
    <source>
        <dbReference type="UniProtKB" id="Q9BZY9"/>
    </source>
</evidence>
<evidence type="ECO:0000255" key="2"/>
<evidence type="ECO:0000255" key="3">
    <source>
        <dbReference type="PROSITE-ProRule" id="PRU00024"/>
    </source>
</evidence>
<evidence type="ECO:0000255" key="4">
    <source>
        <dbReference type="PROSITE-ProRule" id="PRU00175"/>
    </source>
</evidence>
<evidence type="ECO:0000255" key="5">
    <source>
        <dbReference type="PROSITE-ProRule" id="PRU00548"/>
    </source>
</evidence>
<evidence type="ECO:0000269" key="6">
    <source>
    </source>
</evidence>
<evidence type="ECO:0000269" key="7">
    <source>
    </source>
</evidence>
<evidence type="ECO:0000269" key="8">
    <source>
    </source>
</evidence>
<evidence type="ECO:0000303" key="9">
    <source>
    </source>
</evidence>
<evidence type="ECO:0000305" key="10"/>
<evidence type="ECO:0000312" key="11">
    <source>
        <dbReference type="MGI" id="MGI:2385051"/>
    </source>
</evidence>
<comment type="function">
    <text evidence="6 7 8">E3 ubiquitin-protein ligase that acts as a regulator of antiviral immune response and inflammation by mediating ubiquitination of substrates (PubMed:27929086, PubMed:27992402). Acts as a regulator of innate immune defense against viruses by mediating 'Lys-63'-linked ubiquitination of MAVS, promoting MAVS polymerization and formation of three-stranded helical filaments on mitochondria (PubMed:27992402). Acts as a negative regulator of the NLRP3 inflammasome by catalyzing 'Lys-48'-linked ubiquitination of NLRP3, leading to its degradation (PubMed:27929086). Regulator of Src-induced anchorage independent cell growth (PubMed:19665990).</text>
</comment>
<comment type="catalytic activity">
    <reaction evidence="8">
        <text>S-ubiquitinyl-[E2 ubiquitin-conjugating enzyme]-L-cysteine + [acceptor protein]-L-lysine = [E2 ubiquitin-conjugating enzyme]-L-cysteine + N(6)-ubiquitinyl-[acceptor protein]-L-lysine.</text>
        <dbReference type="EC" id="2.3.2.27"/>
    </reaction>
</comment>
<comment type="pathway">
    <text evidence="8">Protein modification; protein ubiquitination.</text>
</comment>
<comment type="subunit">
    <text evidence="1 6">May form oligomers (By similarity). Interacts with isoform p52shc of SHC1 (PubMed:19665990).</text>
</comment>
<comment type="subcellular location">
    <subcellularLocation>
        <location evidence="1">Cytoplasm</location>
    </subcellularLocation>
    <subcellularLocation>
        <location evidence="1">Mitochondrion</location>
    </subcellularLocation>
    <text evidence="1">Predominantly expressed in the cytoplasm but a fraction is associated with the mitochondria.</text>
</comment>
<comment type="tissue specificity">
    <text evidence="6">Highly expressed in the gastrointestrinal tract, with high expression in the small intestine, moderate in the large intestine and weak in the stomach and esophagus.</text>
</comment>
<comment type="induction">
    <text evidence="7">Up-regulated in response to lipopolysaccharid and IL1B treatment.</text>
</comment>
<comment type="PTM">
    <text evidence="1">Auto-ubiquitinated (in vitro).</text>
</comment>
<comment type="disruption phenotype">
    <text evidence="7 8">Mice are viable, normal in size and without gross physiological or behavioral abnormalities (PubMed:27992402). Mice are however more susceptible to infection with RNA virus due to impaired cellular antiviral response (PubMed:27992402). Mice also show increased inflammatory response, characterized by enhanced NLRP3 inflammasome activation (PubMed:27929086). Increased NLRP3 inflammasome activation leads to an aggravation of alum-induced peritonitis (PubMed:27929086). In contrast, it attenuates the severity of dextran sodium sulfate-induced colitis, an inflammatory bowel diseases model in which NLRP3 possesses protective roles (PubMed:27929086).</text>
</comment>
<comment type="similarity">
    <text evidence="10">Belongs to the TRIM/RBCC family.</text>
</comment>